<comment type="function">
    <text evidence="1">Hydrolyzes trehalose to glucose. Could be involved, in cells returning to low osmolarity conditions, in the utilization of the accumulated cytoplasmic trehalose, which was synthesized in response to high osmolarity.</text>
</comment>
<comment type="catalytic activity">
    <reaction evidence="1">
        <text>alpha,alpha-trehalose + H2O = alpha-D-glucose + beta-D-glucose</text>
        <dbReference type="Rhea" id="RHEA:32675"/>
        <dbReference type="ChEBI" id="CHEBI:15377"/>
        <dbReference type="ChEBI" id="CHEBI:15903"/>
        <dbReference type="ChEBI" id="CHEBI:16551"/>
        <dbReference type="ChEBI" id="CHEBI:17925"/>
        <dbReference type="EC" id="3.2.1.28"/>
    </reaction>
</comment>
<comment type="pathway">
    <text evidence="1">Glycan degradation; trehalose degradation; D-glucose from alpha,alpha-trehalose: step 1/1.</text>
</comment>
<comment type="subunit">
    <text evidence="1">Monomer.</text>
</comment>
<comment type="subcellular location">
    <subcellularLocation>
        <location evidence="1">Cytoplasm</location>
    </subcellularLocation>
</comment>
<comment type="similarity">
    <text evidence="1">Belongs to the glycosyl hydrolase 37 family.</text>
</comment>
<sequence>MLNQKIQNPNPDELMIEVDLCYELDPYELKLDEMIEAEPEPEMIEGLPASDALTPADRYLELFEHVQSAKIFPDSKTFPDCAPKMDPLDILIRYRKVRRHRDFDLRKFVENHFWLPEVYSSEYVSDPQNSLKEHIDQLWPVLTREPQDHIPWSSLLALPQSYIVPGGRFSETYYWDSYFTMLGLAESGREDLLKCMADNFAWMIENYGHIPNGNRTYYLSRSQPPVFALMVELFEEDGVRGARRYLDHLKMEYAFWMDGAESLIPNQAYRHVVRMPDGSLLNRYWDDRDTPRDESWLEDVETAKHSGRPPNEVYRDLRAGAASGWDYSSRWLRDTGRLASIRTTQFIPIDLNAFLFKLESAIANISALKGEKETEALFRQKASARRDAVNRYLWDDENGIYRDYDWRREQLALFSAAAIVPLYVGMANHEQADRLANAVRSRLLTPGGILASEYETGEQWDKPNGWAPLQWMAIQGFKMYGDDLLGDEIARSWLKTVNQFYLEQHKLIEKYHIADGVPREGGGGEYPLQDGFGWTNGVVRRLIGLYGEP</sequence>
<name>TREF_ECO57</name>
<evidence type="ECO:0000255" key="1">
    <source>
        <dbReference type="HAMAP-Rule" id="MF_01059"/>
    </source>
</evidence>
<organism>
    <name type="scientific">Escherichia coli O157:H7</name>
    <dbReference type="NCBI Taxonomy" id="83334"/>
    <lineage>
        <taxon>Bacteria</taxon>
        <taxon>Pseudomonadati</taxon>
        <taxon>Pseudomonadota</taxon>
        <taxon>Gammaproteobacteria</taxon>
        <taxon>Enterobacterales</taxon>
        <taxon>Enterobacteriaceae</taxon>
        <taxon>Escherichia</taxon>
    </lineage>
</organism>
<keyword id="KW-0963">Cytoplasm</keyword>
<keyword id="KW-0326">Glycosidase</keyword>
<keyword id="KW-0378">Hydrolase</keyword>
<keyword id="KW-1185">Reference proteome</keyword>
<reference key="1">
    <citation type="journal article" date="2001" name="Nature">
        <title>Genome sequence of enterohaemorrhagic Escherichia coli O157:H7.</title>
        <authorList>
            <person name="Perna N.T."/>
            <person name="Plunkett G. III"/>
            <person name="Burland V."/>
            <person name="Mau B."/>
            <person name="Glasner J.D."/>
            <person name="Rose D.J."/>
            <person name="Mayhew G.F."/>
            <person name="Evans P.S."/>
            <person name="Gregor J."/>
            <person name="Kirkpatrick H.A."/>
            <person name="Posfai G."/>
            <person name="Hackett J."/>
            <person name="Klink S."/>
            <person name="Boutin A."/>
            <person name="Shao Y."/>
            <person name="Miller L."/>
            <person name="Grotbeck E.J."/>
            <person name="Davis N.W."/>
            <person name="Lim A."/>
            <person name="Dimalanta E.T."/>
            <person name="Potamousis K."/>
            <person name="Apodaca J."/>
            <person name="Anantharaman T.S."/>
            <person name="Lin J."/>
            <person name="Yen G."/>
            <person name="Schwartz D.C."/>
            <person name="Welch R.A."/>
            <person name="Blattner F.R."/>
        </authorList>
    </citation>
    <scope>NUCLEOTIDE SEQUENCE [LARGE SCALE GENOMIC DNA]</scope>
    <source>
        <strain>O157:H7 / EDL933 / ATCC 700927 / EHEC</strain>
    </source>
</reference>
<reference key="2">
    <citation type="journal article" date="2001" name="DNA Res.">
        <title>Complete genome sequence of enterohemorrhagic Escherichia coli O157:H7 and genomic comparison with a laboratory strain K-12.</title>
        <authorList>
            <person name="Hayashi T."/>
            <person name="Makino K."/>
            <person name="Ohnishi M."/>
            <person name="Kurokawa K."/>
            <person name="Ishii K."/>
            <person name="Yokoyama K."/>
            <person name="Han C.-G."/>
            <person name="Ohtsubo E."/>
            <person name="Nakayama K."/>
            <person name="Murata T."/>
            <person name="Tanaka M."/>
            <person name="Tobe T."/>
            <person name="Iida T."/>
            <person name="Takami H."/>
            <person name="Honda T."/>
            <person name="Sasakawa C."/>
            <person name="Ogasawara N."/>
            <person name="Yasunaga T."/>
            <person name="Kuhara S."/>
            <person name="Shiba T."/>
            <person name="Hattori M."/>
            <person name="Shinagawa H."/>
        </authorList>
    </citation>
    <scope>NUCLEOTIDE SEQUENCE [LARGE SCALE GENOMIC DNA]</scope>
    <source>
        <strain>O157:H7 / Sakai / RIMD 0509952 / EHEC</strain>
    </source>
</reference>
<proteinExistence type="inferred from homology"/>
<protein>
    <recommendedName>
        <fullName evidence="1">Cytoplasmic trehalase</fullName>
        <ecNumber evidence="1">3.2.1.28</ecNumber>
    </recommendedName>
    <alternativeName>
        <fullName evidence="1">Alpha,alpha-trehalase</fullName>
    </alternativeName>
    <alternativeName>
        <fullName evidence="1">Alpha,alpha-trehalose glucohydrolase</fullName>
    </alternativeName>
</protein>
<dbReference type="EC" id="3.2.1.28" evidence="1"/>
<dbReference type="EMBL" id="AE005174">
    <property type="protein sequence ID" value="AAG58660.1"/>
    <property type="molecule type" value="Genomic_DNA"/>
</dbReference>
<dbReference type="EMBL" id="BA000007">
    <property type="protein sequence ID" value="BAB37822.1"/>
    <property type="molecule type" value="Genomic_DNA"/>
</dbReference>
<dbReference type="PIR" id="G91178">
    <property type="entry name" value="G91178"/>
</dbReference>
<dbReference type="PIR" id="H86024">
    <property type="entry name" value="H86024"/>
</dbReference>
<dbReference type="RefSeq" id="NP_312426.1">
    <property type="nucleotide sequence ID" value="NC_002695.1"/>
</dbReference>
<dbReference type="RefSeq" id="WP_000934216.1">
    <property type="nucleotide sequence ID" value="NZ_VOAI01000004.1"/>
</dbReference>
<dbReference type="SMR" id="P62602"/>
<dbReference type="STRING" id="155864.Z4932"/>
<dbReference type="DNASU" id="961133"/>
<dbReference type="GeneID" id="915743"/>
<dbReference type="KEGG" id="ece:Z4932"/>
<dbReference type="KEGG" id="ecs:ECs_4399"/>
<dbReference type="PATRIC" id="fig|386585.9.peg.4598"/>
<dbReference type="eggNOG" id="COG1626">
    <property type="taxonomic scope" value="Bacteria"/>
</dbReference>
<dbReference type="HOGENOM" id="CLU_006451_3_1_6"/>
<dbReference type="OMA" id="DAPFGWA"/>
<dbReference type="UniPathway" id="UPA00300">
    <property type="reaction ID" value="UER00535"/>
</dbReference>
<dbReference type="Proteomes" id="UP000000558">
    <property type="component" value="Chromosome"/>
</dbReference>
<dbReference type="Proteomes" id="UP000002519">
    <property type="component" value="Chromosome"/>
</dbReference>
<dbReference type="GO" id="GO:0005737">
    <property type="term" value="C:cytoplasm"/>
    <property type="evidence" value="ECO:0007669"/>
    <property type="project" value="UniProtKB-SubCell"/>
</dbReference>
<dbReference type="GO" id="GO:0004555">
    <property type="term" value="F:alpha,alpha-trehalase activity"/>
    <property type="evidence" value="ECO:0007669"/>
    <property type="project" value="UniProtKB-UniRule"/>
</dbReference>
<dbReference type="GO" id="GO:0071474">
    <property type="term" value="P:cellular hyperosmotic response"/>
    <property type="evidence" value="ECO:0007669"/>
    <property type="project" value="InterPro"/>
</dbReference>
<dbReference type="GO" id="GO:0005993">
    <property type="term" value="P:trehalose catabolic process"/>
    <property type="evidence" value="ECO:0007669"/>
    <property type="project" value="UniProtKB-UniRule"/>
</dbReference>
<dbReference type="FunFam" id="1.50.10.10:FF:000003">
    <property type="entry name" value="Cytoplasmic trehalase"/>
    <property type="match status" value="1"/>
</dbReference>
<dbReference type="Gene3D" id="1.50.10.10">
    <property type="match status" value="1"/>
</dbReference>
<dbReference type="HAMAP" id="MF_01059">
    <property type="entry name" value="Cyt_trehalase"/>
    <property type="match status" value="1"/>
</dbReference>
<dbReference type="InterPro" id="IPR008928">
    <property type="entry name" value="6-hairpin_glycosidase_sf"/>
</dbReference>
<dbReference type="InterPro" id="IPR012341">
    <property type="entry name" value="6hp_glycosidase-like_sf"/>
</dbReference>
<dbReference type="InterPro" id="IPR023715">
    <property type="entry name" value="Cyt_trehalase"/>
</dbReference>
<dbReference type="InterPro" id="IPR001661">
    <property type="entry name" value="Glyco_hydro_37"/>
</dbReference>
<dbReference type="InterPro" id="IPR018232">
    <property type="entry name" value="Glyco_hydro_37_CS"/>
</dbReference>
<dbReference type="NCBIfam" id="NF009773">
    <property type="entry name" value="PRK13270.1"/>
    <property type="match status" value="1"/>
</dbReference>
<dbReference type="NCBIfam" id="NF009774">
    <property type="entry name" value="PRK13271.1"/>
    <property type="match status" value="1"/>
</dbReference>
<dbReference type="PANTHER" id="PTHR23403:SF8">
    <property type="entry name" value="CYTOPLASMIC TREHALASE"/>
    <property type="match status" value="1"/>
</dbReference>
<dbReference type="PANTHER" id="PTHR23403">
    <property type="entry name" value="TREHALASE"/>
    <property type="match status" value="1"/>
</dbReference>
<dbReference type="Pfam" id="PF01204">
    <property type="entry name" value="Trehalase"/>
    <property type="match status" value="1"/>
</dbReference>
<dbReference type="PRINTS" id="PR00744">
    <property type="entry name" value="GLHYDRLASE37"/>
</dbReference>
<dbReference type="SUPFAM" id="SSF48208">
    <property type="entry name" value="Six-hairpin glycosidases"/>
    <property type="match status" value="1"/>
</dbReference>
<dbReference type="PROSITE" id="PS00927">
    <property type="entry name" value="TREHALASE_1"/>
    <property type="match status" value="1"/>
</dbReference>
<dbReference type="PROSITE" id="PS00928">
    <property type="entry name" value="TREHALASE_2"/>
    <property type="match status" value="1"/>
</dbReference>
<feature type="chain" id="PRO_0000173787" description="Cytoplasmic trehalase">
    <location>
        <begin position="1"/>
        <end position="549"/>
    </location>
</feature>
<feature type="active site" description="Proton donor/acceptor" evidence="1">
    <location>
        <position position="326"/>
    </location>
</feature>
<feature type="active site" description="Proton donor/acceptor" evidence="1">
    <location>
        <position position="509"/>
    </location>
</feature>
<feature type="binding site" evidence="1">
    <location>
        <position position="168"/>
    </location>
    <ligand>
        <name>substrate</name>
    </ligand>
</feature>
<feature type="binding site" evidence="1">
    <location>
        <begin position="175"/>
        <end position="176"/>
    </location>
    <ligand>
        <name>substrate</name>
    </ligand>
</feature>
<feature type="binding site" evidence="1">
    <location>
        <position position="212"/>
    </location>
    <ligand>
        <name>substrate</name>
    </ligand>
</feature>
<feature type="binding site" evidence="1">
    <location>
        <begin position="221"/>
        <end position="223"/>
    </location>
    <ligand>
        <name>substrate</name>
    </ligand>
</feature>
<feature type="binding site" evidence="1">
    <location>
        <begin position="292"/>
        <end position="294"/>
    </location>
    <ligand>
        <name>substrate</name>
    </ligand>
</feature>
<feature type="binding site" evidence="1">
    <location>
        <position position="324"/>
    </location>
    <ligand>
        <name>substrate</name>
    </ligand>
</feature>
<feature type="binding site" evidence="1">
    <location>
        <position position="525"/>
    </location>
    <ligand>
        <name>substrate</name>
    </ligand>
</feature>
<gene>
    <name evidence="1" type="primary">treF</name>
    <name type="ordered locus">Z4932</name>
    <name type="ordered locus">ECs4399</name>
</gene>
<accession>P62602</accession>
<accession>P37196</accession>